<feature type="chain" id="PRO_1000165024" description="Glucosamine-6-phosphate deaminase">
    <location>
        <begin position="1"/>
        <end position="266"/>
    </location>
</feature>
<feature type="active site" description="Proton acceptor; for enolization step" evidence="1">
    <location>
        <position position="72"/>
    </location>
</feature>
<feature type="active site" description="For ring-opening step" evidence="1">
    <location>
        <position position="141"/>
    </location>
</feature>
<feature type="active site" description="Proton acceptor; for ring-opening step" evidence="1">
    <location>
        <position position="143"/>
    </location>
</feature>
<feature type="active site" description="For ring-opening step" evidence="1">
    <location>
        <position position="148"/>
    </location>
</feature>
<feature type="site" description="Part of the allosteric site" evidence="1">
    <location>
        <position position="151"/>
    </location>
</feature>
<feature type="site" description="Part of the allosteric site" evidence="1">
    <location>
        <position position="158"/>
    </location>
</feature>
<feature type="site" description="Part of the allosteric site" evidence="1">
    <location>
        <position position="160"/>
    </location>
</feature>
<feature type="site" description="Part of the allosteric site" evidence="1">
    <location>
        <position position="161"/>
    </location>
</feature>
<feature type="site" description="Part of the allosteric site" evidence="1">
    <location>
        <position position="254"/>
    </location>
</feature>
<dbReference type="EC" id="3.5.99.6" evidence="1"/>
<dbReference type="EMBL" id="CP000857">
    <property type="protein sequence ID" value="ACN44868.1"/>
    <property type="molecule type" value="Genomic_DNA"/>
</dbReference>
<dbReference type="RefSeq" id="WP_001237059.1">
    <property type="nucleotide sequence ID" value="NC_012125.1"/>
</dbReference>
<dbReference type="SMR" id="C0PWA5"/>
<dbReference type="KEGG" id="sei:SPC_0693"/>
<dbReference type="HOGENOM" id="CLU_049611_0_1_6"/>
<dbReference type="UniPathway" id="UPA00629">
    <property type="reaction ID" value="UER00684"/>
</dbReference>
<dbReference type="Proteomes" id="UP000001599">
    <property type="component" value="Chromosome"/>
</dbReference>
<dbReference type="GO" id="GO:0005737">
    <property type="term" value="C:cytoplasm"/>
    <property type="evidence" value="ECO:0007669"/>
    <property type="project" value="TreeGrafter"/>
</dbReference>
<dbReference type="GO" id="GO:0004342">
    <property type="term" value="F:glucosamine-6-phosphate deaminase activity"/>
    <property type="evidence" value="ECO:0007669"/>
    <property type="project" value="UniProtKB-UniRule"/>
</dbReference>
<dbReference type="GO" id="GO:0042802">
    <property type="term" value="F:identical protein binding"/>
    <property type="evidence" value="ECO:0007669"/>
    <property type="project" value="TreeGrafter"/>
</dbReference>
<dbReference type="GO" id="GO:0005975">
    <property type="term" value="P:carbohydrate metabolic process"/>
    <property type="evidence" value="ECO:0007669"/>
    <property type="project" value="InterPro"/>
</dbReference>
<dbReference type="GO" id="GO:0006043">
    <property type="term" value="P:glucosamine catabolic process"/>
    <property type="evidence" value="ECO:0007669"/>
    <property type="project" value="TreeGrafter"/>
</dbReference>
<dbReference type="GO" id="GO:0006046">
    <property type="term" value="P:N-acetylglucosamine catabolic process"/>
    <property type="evidence" value="ECO:0007669"/>
    <property type="project" value="TreeGrafter"/>
</dbReference>
<dbReference type="GO" id="GO:0019262">
    <property type="term" value="P:N-acetylneuraminate catabolic process"/>
    <property type="evidence" value="ECO:0007669"/>
    <property type="project" value="UniProtKB-UniRule"/>
</dbReference>
<dbReference type="CDD" id="cd01399">
    <property type="entry name" value="GlcN6P_deaminase"/>
    <property type="match status" value="1"/>
</dbReference>
<dbReference type="FunFam" id="3.40.50.1360:FF:000002">
    <property type="entry name" value="Glucosamine-6-phosphate deaminase"/>
    <property type="match status" value="1"/>
</dbReference>
<dbReference type="Gene3D" id="3.40.50.1360">
    <property type="match status" value="1"/>
</dbReference>
<dbReference type="HAMAP" id="MF_01241">
    <property type="entry name" value="GlcN6P_deamin"/>
    <property type="match status" value="1"/>
</dbReference>
<dbReference type="InterPro" id="IPR006148">
    <property type="entry name" value="Glc/Gal-6P_isomerase"/>
</dbReference>
<dbReference type="InterPro" id="IPR004547">
    <property type="entry name" value="Glucosamine6P_isomerase"/>
</dbReference>
<dbReference type="InterPro" id="IPR018321">
    <property type="entry name" value="Glucosamine6P_isomerase_CS"/>
</dbReference>
<dbReference type="InterPro" id="IPR037171">
    <property type="entry name" value="NagB/RpiA_transferase-like"/>
</dbReference>
<dbReference type="NCBIfam" id="TIGR00502">
    <property type="entry name" value="nagB"/>
    <property type="match status" value="1"/>
</dbReference>
<dbReference type="NCBIfam" id="NF001685">
    <property type="entry name" value="PRK00443.1-5"/>
    <property type="match status" value="1"/>
</dbReference>
<dbReference type="PANTHER" id="PTHR11280">
    <property type="entry name" value="GLUCOSAMINE-6-PHOSPHATE ISOMERASE"/>
    <property type="match status" value="1"/>
</dbReference>
<dbReference type="PANTHER" id="PTHR11280:SF5">
    <property type="entry name" value="GLUCOSAMINE-6-PHOSPHATE ISOMERASE"/>
    <property type="match status" value="1"/>
</dbReference>
<dbReference type="Pfam" id="PF01182">
    <property type="entry name" value="Glucosamine_iso"/>
    <property type="match status" value="1"/>
</dbReference>
<dbReference type="SUPFAM" id="SSF100950">
    <property type="entry name" value="NagB/RpiA/CoA transferase-like"/>
    <property type="match status" value="1"/>
</dbReference>
<dbReference type="PROSITE" id="PS01161">
    <property type="entry name" value="GLC_GALNAC_ISOMERASE"/>
    <property type="match status" value="1"/>
</dbReference>
<organism>
    <name type="scientific">Salmonella paratyphi C (strain RKS4594)</name>
    <dbReference type="NCBI Taxonomy" id="476213"/>
    <lineage>
        <taxon>Bacteria</taxon>
        <taxon>Pseudomonadati</taxon>
        <taxon>Pseudomonadota</taxon>
        <taxon>Gammaproteobacteria</taxon>
        <taxon>Enterobacterales</taxon>
        <taxon>Enterobacteriaceae</taxon>
        <taxon>Salmonella</taxon>
    </lineage>
</organism>
<evidence type="ECO:0000255" key="1">
    <source>
        <dbReference type="HAMAP-Rule" id="MF_01241"/>
    </source>
</evidence>
<keyword id="KW-0021">Allosteric enzyme</keyword>
<keyword id="KW-0119">Carbohydrate metabolism</keyword>
<keyword id="KW-0378">Hydrolase</keyword>
<gene>
    <name evidence="1" type="primary">nagB</name>
    <name type="ordered locus">SPC_0693</name>
</gene>
<sequence length="266" mass="29632">MRLIPLSTAEQVGKWAARHIVNRINAFKPTADRPFVLGLPTGGTPLTAYKALVEMHKAGEVSFKHVVTFNMDEYVGLPKEHPESYHSFMHRNFFDHVDIPAENINLLNGNAPDIDAECRQYEEKIRSYGKIHLFMGGVGNDGHIAFNEPASSLASRTRIKTLTHDTRVANSRFFDGDVNQVPKYALTVGVGTLLDAEEVMILVLGHQKAQALQAAVEGNVNHMWTISCLQLHPKAVVVCDEPSTMELKVKTLKYFNELEAENIKGL</sequence>
<accession>C0PWA5</accession>
<protein>
    <recommendedName>
        <fullName evidence="1">Glucosamine-6-phosphate deaminase</fullName>
        <ecNumber evidence="1">3.5.99.6</ecNumber>
    </recommendedName>
    <alternativeName>
        <fullName evidence="1">GlcN6P deaminase</fullName>
        <shortName evidence="1">GNPDA</shortName>
    </alternativeName>
    <alternativeName>
        <fullName evidence="1">Glucosamine-6-phosphate isomerase</fullName>
    </alternativeName>
</protein>
<comment type="function">
    <text evidence="1">Catalyzes the reversible isomerization-deamination of glucosamine 6-phosphate (GlcN6P) to form fructose 6-phosphate (Fru6P) and ammonium ion.</text>
</comment>
<comment type="catalytic activity">
    <reaction evidence="1">
        <text>alpha-D-glucosamine 6-phosphate + H2O = beta-D-fructose 6-phosphate + NH4(+)</text>
        <dbReference type="Rhea" id="RHEA:12172"/>
        <dbReference type="ChEBI" id="CHEBI:15377"/>
        <dbReference type="ChEBI" id="CHEBI:28938"/>
        <dbReference type="ChEBI" id="CHEBI:57634"/>
        <dbReference type="ChEBI" id="CHEBI:75989"/>
        <dbReference type="EC" id="3.5.99.6"/>
    </reaction>
</comment>
<comment type="activity regulation">
    <text evidence="1">Allosterically activated by N-acetylglucosamine 6-phosphate (GlcNAc6P).</text>
</comment>
<comment type="pathway">
    <text evidence="1">Amino-sugar metabolism; N-acetylneuraminate degradation; D-fructose 6-phosphate from N-acetylneuraminate: step 5/5.</text>
</comment>
<comment type="subunit">
    <text evidence="1">Homohexamer.</text>
</comment>
<comment type="similarity">
    <text evidence="1">Belongs to the glucosamine/galactosamine-6-phosphate isomerase family. NagB subfamily.</text>
</comment>
<name>NAGB_SALPC</name>
<reference key="1">
    <citation type="journal article" date="2009" name="PLoS ONE">
        <title>Salmonella paratyphi C: genetic divergence from Salmonella choleraesuis and pathogenic convergence with Salmonella typhi.</title>
        <authorList>
            <person name="Liu W.-Q."/>
            <person name="Feng Y."/>
            <person name="Wang Y."/>
            <person name="Zou Q.-H."/>
            <person name="Chen F."/>
            <person name="Guo J.-T."/>
            <person name="Peng Y.-H."/>
            <person name="Jin Y."/>
            <person name="Li Y.-G."/>
            <person name="Hu S.-N."/>
            <person name="Johnston R.N."/>
            <person name="Liu G.-R."/>
            <person name="Liu S.-L."/>
        </authorList>
    </citation>
    <scope>NUCLEOTIDE SEQUENCE [LARGE SCALE GENOMIC DNA]</scope>
    <source>
        <strain>RKS4594</strain>
    </source>
</reference>
<proteinExistence type="inferred from homology"/>